<sequence>MRESFASLLATGAGKLALSLLFAATPFTSAYTFNQVPSPNLDISNLGRIAFAGDFDSISLYEYEGQTQETPSRNGTLLSRYPNGVFASINTTDADIKAMCNLRINDTERIVFAGNFTGVGNMPTPGGIALLNTTDGRVRALDGLDGTVNTLYCDKSGGQVYVGGLFNGLNSSNAIIWKDGWQELDFNGFNGAVHSIAQAAGGNIIFGGEFTGIGRGNASVASENATQIIPISSANISAQTNSGLPGFTDPKVIACKSDYSSGGAGQTWLLANNAPGFWKADFGFGFEPTRLKMYNTDFEGRGTKTFRFTALPDGGIMNMSYVDPSNGRTAYCDARCPLPQGNKTAQDFTFVNVVGMNSFRVDISEWYGSGAGLNGIQLFQDAMFSYAVNDFNEAQNCGASGTLSKASSTGNWQVSPSHNSNSQYLTTVLQGDPIRPDAASVTFSPDIKQSGNYSVTIYTPGCQGDGTCGSRGRVNVTATIGQGQSEEAILWQTNNFDKYDEVYNGYIDAAGGFQPSVILRPASGQGPGPLTVVAQRVRFTLLKATSGNINGLFEYKPGEKLDENNLADSVINAAGASLDPRGKALITSVSSSGQNLYVAGNFSNNDGRNNIFSFKQGASDPTALPNRGLNRQVMTLYQNDSMLYVGGNFTNTGEGNVQGLNGVAALVNDKWQPLGAGVNGVVLYLVPFSLNVTANQPEQVLAVSGFFDSVNEFNGNPSTNVQDFAVWVPSRSNWLHNLDFFTLAMSGRLMTFADVPGGERWFGGSVSSGSLLASGTAELNNGDDALSLEAFPVNLQAQQSGEAGVPSRKRAILEGQDMSTTGVRTGKFHTEGNNNMTILAGHFSTTGTDQQNITNLVIVDGGDSDKITGFSDELDANSTFTALAVTSNNILFAGGMVTGRLDNSRVAGLVTYDLTAKRFTPVQPPPLQGPNITVNAIAPRPNSNDVFVAGQFLTAGSLGCAAVCIWNTERNQWNSPGNSLSGVVSSLTWISDTQMYISGNLTSGDNVTTILSFNPSNNQFTAIPGAINLPGPVNALTIANEDGSQFWAAGQGSDGTAYLQRYNGEQQWMPVDSALFGPGTDIRGIQVIQVSENHESSDLISDNEDLLLMGQIQIPNFGTVSAALFNGTNLVPFLLATKGADGQTTDGSLSSIFVEFPAFFSQQNGKHLALWAIVLIGLAIALVLTFLLVVAGILLEWYRNKAKGYSPAPQSYPDRMGNVGRLPPEQLFGTLSVPRSRPTNYLFTCTALCIGMDVPTIHRRCNPVAHHKQLPAWTEQVRTEQTTETRPAINEDGCGTSIGGLLFRLPFSRARRISGDDVFDTILACSS</sequence>
<evidence type="ECO:0000250" key="1">
    <source>
        <dbReference type="UniProtKB" id="O14239"/>
    </source>
</evidence>
<evidence type="ECO:0000255" key="2"/>
<evidence type="ECO:0000255" key="3">
    <source>
        <dbReference type="PROSITE-ProRule" id="PRU00498"/>
    </source>
</evidence>
<evidence type="ECO:0000269" key="4">
    <source>
    </source>
</evidence>
<evidence type="ECO:0000303" key="5">
    <source>
    </source>
</evidence>
<evidence type="ECO:0000305" key="6"/>
<organism>
    <name type="scientific">Phoma sp. (strain ATCC 20986 / MF5453)</name>
    <dbReference type="NCBI Taxonomy" id="1828523"/>
    <lineage>
        <taxon>Eukaryota</taxon>
        <taxon>Fungi</taxon>
        <taxon>Dikarya</taxon>
        <taxon>Ascomycota</taxon>
        <taxon>Pezizomycotina</taxon>
        <taxon>Dothideomycetes</taxon>
        <taxon>Pleosporomycetidae</taxon>
        <taxon>Pleosporales</taxon>
        <taxon>Pleosporineae</taxon>
        <taxon>Didymellaceae</taxon>
        <taxon>Phoma</taxon>
    </lineage>
</organism>
<comment type="function">
    <text evidence="1 4">Has been identified within the cluster that mediates the biosynthesis of squalestatin, but as its expression does not follow that of the other cluster members and it is not conserved in close related clusters, L1 seems not to be involved in the biosynthesis of squalestatin (PubMed:27056201). Probably plays a role as a cell polarity regulator (By similarity).</text>
</comment>
<comment type="subcellular location">
    <subcellularLocation>
        <location evidence="1">Cell membrane</location>
        <topology evidence="2">Single-pass type I membrane protein</topology>
    </subcellularLocation>
    <text evidence="1">Localizes at the cell cortex of the 'old' growing cell tips.</text>
</comment>
<comment type="induction">
    <text evidence="4">Expression is not affected by switching from squalestatin non-producing conditions to producing conditions.</text>
</comment>
<comment type="similarity">
    <text evidence="6">Belongs to the RAX2 family.</text>
</comment>
<accession>A0A3G1DJF1</accession>
<feature type="signal peptide" evidence="2">
    <location>
        <begin position="1"/>
        <end position="30"/>
    </location>
</feature>
<feature type="chain" id="PRO_5018033050" description="Polarized growth protein L1">
    <location>
        <begin position="31"/>
        <end position="1327"/>
    </location>
</feature>
<feature type="topological domain" description="Extracellular" evidence="2">
    <location>
        <begin position="31"/>
        <end position="1169"/>
    </location>
</feature>
<feature type="transmembrane region" description="Helical" evidence="2">
    <location>
        <begin position="1170"/>
        <end position="1190"/>
    </location>
</feature>
<feature type="topological domain" description="Cytoplasmic" evidence="2">
    <location>
        <begin position="1191"/>
        <end position="1327"/>
    </location>
</feature>
<feature type="repeat" description="Kelch 1" evidence="2">
    <location>
        <begin position="595"/>
        <end position="641"/>
    </location>
</feature>
<feature type="repeat" description="Kelch 2" evidence="2">
    <location>
        <begin position="699"/>
        <end position="754"/>
    </location>
</feature>
<feature type="repeat" description="Kelch 3" evidence="2">
    <location>
        <begin position="945"/>
        <end position="993"/>
    </location>
</feature>
<feature type="repeat" description="Kelch 4" evidence="2">
    <location>
        <begin position="994"/>
        <end position="1040"/>
    </location>
</feature>
<feature type="glycosylation site" description="N-linked (GlcNAc...) asparagine" evidence="3">
    <location>
        <position position="74"/>
    </location>
</feature>
<feature type="glycosylation site" description="N-linked (GlcNAc...) asparagine" evidence="3">
    <location>
        <position position="90"/>
    </location>
</feature>
<feature type="glycosylation site" description="N-linked (GlcNAc...) asparagine" evidence="3">
    <location>
        <position position="105"/>
    </location>
</feature>
<feature type="glycosylation site" description="N-linked (GlcNAc...) asparagine" evidence="3">
    <location>
        <position position="115"/>
    </location>
</feature>
<feature type="glycosylation site" description="N-linked (GlcNAc...) asparagine" evidence="3">
    <location>
        <position position="132"/>
    </location>
</feature>
<feature type="glycosylation site" description="N-linked (GlcNAc...) asparagine" evidence="3">
    <location>
        <position position="170"/>
    </location>
</feature>
<feature type="glycosylation site" description="N-linked (GlcNAc...) asparagine" evidence="3">
    <location>
        <position position="217"/>
    </location>
</feature>
<feature type="glycosylation site" description="N-linked (GlcNAc...) asparagine" evidence="3">
    <location>
        <position position="224"/>
    </location>
</feature>
<feature type="glycosylation site" description="N-linked (GlcNAc...) asparagine" evidence="3">
    <location>
        <position position="235"/>
    </location>
</feature>
<feature type="glycosylation site" description="N-linked (GlcNAc...) asparagine" evidence="3">
    <location>
        <position position="318"/>
    </location>
</feature>
<feature type="glycosylation site" description="N-linked (GlcNAc...) asparagine" evidence="3">
    <location>
        <position position="342"/>
    </location>
</feature>
<feature type="glycosylation site" description="N-linked (GlcNAc...) asparagine" evidence="3">
    <location>
        <position position="452"/>
    </location>
</feature>
<feature type="glycosylation site" description="N-linked (GlcNAc...) asparagine" evidence="3">
    <location>
        <position position="475"/>
    </location>
</feature>
<feature type="glycosylation site" description="N-linked (GlcNAc...) asparagine" evidence="3">
    <location>
        <position position="601"/>
    </location>
</feature>
<feature type="glycosylation site" description="N-linked (GlcNAc...) asparagine" evidence="3">
    <location>
        <position position="639"/>
    </location>
</feature>
<feature type="glycosylation site" description="N-linked (GlcNAc...) asparagine" evidence="3">
    <location>
        <position position="648"/>
    </location>
</feature>
<feature type="glycosylation site" description="N-linked (GlcNAc...) asparagine" evidence="3">
    <location>
        <position position="691"/>
    </location>
</feature>
<feature type="glycosylation site" description="N-linked (GlcNAc...) asparagine" evidence="3">
    <location>
        <position position="835"/>
    </location>
</feature>
<feature type="glycosylation site" description="N-linked (GlcNAc...) asparagine" evidence="3">
    <location>
        <position position="852"/>
    </location>
</feature>
<feature type="glycosylation site" description="N-linked (GlcNAc...) asparagine" evidence="3">
    <location>
        <position position="877"/>
    </location>
</feature>
<feature type="glycosylation site" description="N-linked (GlcNAc...) asparagine" evidence="3">
    <location>
        <position position="931"/>
    </location>
</feature>
<feature type="glycosylation site" description="N-linked (GlcNAc...) asparagine" evidence="3">
    <location>
        <position position="1000"/>
    </location>
</feature>
<feature type="glycosylation site" description="N-linked (GlcNAc...) asparagine" evidence="3">
    <location>
        <position position="1006"/>
    </location>
</feature>
<feature type="glycosylation site" description="N-linked (GlcNAc...) asparagine" evidence="3">
    <location>
        <position position="1126"/>
    </location>
</feature>
<protein>
    <recommendedName>
        <fullName evidence="6">Polarized growth protein L1</fullName>
    </recommendedName>
    <alternativeName>
        <fullName evidence="5">Squalestatin S1 biosynthesis cluster protein L1</fullName>
    </alternativeName>
</protein>
<gene>
    <name evidence="5" type="primary">L1</name>
</gene>
<name>MFL1_PHOSM</name>
<dbReference type="EMBL" id="KU946987">
    <property type="protein sequence ID" value="AMY15056.1"/>
    <property type="molecule type" value="Genomic_DNA"/>
</dbReference>
<dbReference type="SMR" id="A0A3G1DJF1"/>
<dbReference type="GlyCosmos" id="A0A3G1DJF1">
    <property type="glycosylation" value="24 sites, No reported glycans"/>
</dbReference>
<dbReference type="GO" id="GO:1902929">
    <property type="term" value="C:plasma membrane of growing cell tip"/>
    <property type="evidence" value="ECO:0007669"/>
    <property type="project" value="TreeGrafter"/>
</dbReference>
<dbReference type="GO" id="GO:0051301">
    <property type="term" value="P:cell division"/>
    <property type="evidence" value="ECO:0007669"/>
    <property type="project" value="UniProtKB-KW"/>
</dbReference>
<dbReference type="Gene3D" id="2.120.10.80">
    <property type="entry name" value="Kelch-type beta propeller"/>
    <property type="match status" value="1"/>
</dbReference>
<dbReference type="InterPro" id="IPR011043">
    <property type="entry name" value="Gal_Oxase/kelch_b-propeller"/>
</dbReference>
<dbReference type="InterPro" id="IPR015915">
    <property type="entry name" value="Kelch-typ_b-propeller"/>
</dbReference>
<dbReference type="InterPro" id="IPR024982">
    <property type="entry name" value="Rax2-like_C"/>
</dbReference>
<dbReference type="InterPro" id="IPR048266">
    <property type="entry name" value="Rax2-like_second"/>
</dbReference>
<dbReference type="InterPro" id="IPR048265">
    <property type="entry name" value="Rax2-like_third"/>
</dbReference>
<dbReference type="PANTHER" id="PTHR31778">
    <property type="entry name" value="BUD SITE SELECTION PROTEIN RAX2"/>
    <property type="match status" value="1"/>
</dbReference>
<dbReference type="PANTHER" id="PTHR31778:SF2">
    <property type="entry name" value="BUD SITE SELECTION PROTEIN RAX2"/>
    <property type="match status" value="1"/>
</dbReference>
<dbReference type="Pfam" id="PF12768">
    <property type="entry name" value="Rax2"/>
    <property type="match status" value="1"/>
</dbReference>
<dbReference type="Pfam" id="PF20842">
    <property type="entry name" value="Rax2_2"/>
    <property type="match status" value="1"/>
</dbReference>
<dbReference type="Pfam" id="PF20843">
    <property type="entry name" value="Rax2_3"/>
    <property type="match status" value="1"/>
</dbReference>
<dbReference type="SUPFAM" id="SSF50965">
    <property type="entry name" value="Galactose oxidase, central domain"/>
    <property type="match status" value="1"/>
</dbReference>
<keyword id="KW-0131">Cell cycle</keyword>
<keyword id="KW-0132">Cell division</keyword>
<keyword id="KW-1003">Cell membrane</keyword>
<keyword id="KW-0325">Glycoprotein</keyword>
<keyword id="KW-0880">Kelch repeat</keyword>
<keyword id="KW-0472">Membrane</keyword>
<keyword id="KW-0677">Repeat</keyword>
<keyword id="KW-0732">Signal</keyword>
<keyword id="KW-0812">Transmembrane</keyword>
<keyword id="KW-1133">Transmembrane helix</keyword>
<reference key="1">
    <citation type="journal article" date="2016" name="Chem. Commun. (Camb.)">
        <title>Identification of genes encoding squalestatin S1 biosynthesis and in vitro production of new squalestatin analogues.</title>
        <authorList>
            <person name="Bonsch B."/>
            <person name="Belt V."/>
            <person name="Bartel C."/>
            <person name="Duensing N."/>
            <person name="Koziol M."/>
            <person name="Lazarus C.M."/>
            <person name="Bailey A.M."/>
            <person name="Simpson T.J."/>
            <person name="Cox R.J."/>
        </authorList>
    </citation>
    <scope>NUCLEOTIDE SEQUENCE [GENOMIC DNA]</scope>
    <scope>FUNCTION</scope>
    <scope>INDUCTION</scope>
</reference>
<proteinExistence type="evidence at transcript level"/>